<gene>
    <name evidence="1" type="primary">darP</name>
    <name type="ordered locus">EFER_4312</name>
</gene>
<protein>
    <recommendedName>
        <fullName evidence="1">Dual-action ribosomal maturation protein DarP</fullName>
    </recommendedName>
    <alternativeName>
        <fullName evidence="1">Large ribosomal subunit assembly factor DarP</fullName>
    </alternativeName>
</protein>
<proteinExistence type="inferred from homology"/>
<organism>
    <name type="scientific">Escherichia fergusonii (strain ATCC 35469 / DSM 13698 / CCUG 18766 / IAM 14443 / JCM 21226 / LMG 7866 / NBRC 102419 / NCTC 12128 / CDC 0568-73)</name>
    <dbReference type="NCBI Taxonomy" id="585054"/>
    <lineage>
        <taxon>Bacteria</taxon>
        <taxon>Pseudomonadati</taxon>
        <taxon>Pseudomonadota</taxon>
        <taxon>Gammaproteobacteria</taxon>
        <taxon>Enterobacterales</taxon>
        <taxon>Enterobacteriaceae</taxon>
        <taxon>Escherichia</taxon>
    </lineage>
</organism>
<reference key="1">
    <citation type="journal article" date="2009" name="PLoS Genet.">
        <title>Organised genome dynamics in the Escherichia coli species results in highly diverse adaptive paths.</title>
        <authorList>
            <person name="Touchon M."/>
            <person name="Hoede C."/>
            <person name="Tenaillon O."/>
            <person name="Barbe V."/>
            <person name="Baeriswyl S."/>
            <person name="Bidet P."/>
            <person name="Bingen E."/>
            <person name="Bonacorsi S."/>
            <person name="Bouchier C."/>
            <person name="Bouvet O."/>
            <person name="Calteau A."/>
            <person name="Chiapello H."/>
            <person name="Clermont O."/>
            <person name="Cruveiller S."/>
            <person name="Danchin A."/>
            <person name="Diard M."/>
            <person name="Dossat C."/>
            <person name="Karoui M.E."/>
            <person name="Frapy E."/>
            <person name="Garry L."/>
            <person name="Ghigo J.M."/>
            <person name="Gilles A.M."/>
            <person name="Johnson J."/>
            <person name="Le Bouguenec C."/>
            <person name="Lescat M."/>
            <person name="Mangenot S."/>
            <person name="Martinez-Jehanne V."/>
            <person name="Matic I."/>
            <person name="Nassif X."/>
            <person name="Oztas S."/>
            <person name="Petit M.A."/>
            <person name="Pichon C."/>
            <person name="Rouy Z."/>
            <person name="Ruf C.S."/>
            <person name="Schneider D."/>
            <person name="Tourret J."/>
            <person name="Vacherie B."/>
            <person name="Vallenet D."/>
            <person name="Medigue C."/>
            <person name="Rocha E.P.C."/>
            <person name="Denamur E."/>
        </authorList>
    </citation>
    <scope>NUCLEOTIDE SEQUENCE [LARGE SCALE GENOMIC DNA]</scope>
    <source>
        <strain>ATCC 35469 / DSM 13698 / BCRC 15582 / CCUG 18766 / IAM 14443 / JCM 21226 / LMG 7866 / NBRC 102419 / NCTC 12128 / CDC 0568-73</strain>
    </source>
</reference>
<keyword id="KW-0963">Cytoplasm</keyword>
<keyword id="KW-0690">Ribosome biogenesis</keyword>
<keyword id="KW-0694">RNA-binding</keyword>
<keyword id="KW-0699">rRNA-binding</keyword>
<dbReference type="EMBL" id="CU928158">
    <property type="protein sequence ID" value="CAQ91731.1"/>
    <property type="molecule type" value="Genomic_DNA"/>
</dbReference>
<dbReference type="SMR" id="B7LMQ3"/>
<dbReference type="KEGG" id="efe:EFER_4312"/>
<dbReference type="HOGENOM" id="CLU_106757_2_0_6"/>
<dbReference type="OrthoDB" id="5293604at2"/>
<dbReference type="Proteomes" id="UP000000745">
    <property type="component" value="Chromosome"/>
</dbReference>
<dbReference type="GO" id="GO:0005829">
    <property type="term" value="C:cytosol"/>
    <property type="evidence" value="ECO:0007669"/>
    <property type="project" value="TreeGrafter"/>
</dbReference>
<dbReference type="GO" id="GO:0043022">
    <property type="term" value="F:ribosome binding"/>
    <property type="evidence" value="ECO:0007669"/>
    <property type="project" value="UniProtKB-UniRule"/>
</dbReference>
<dbReference type="GO" id="GO:0019843">
    <property type="term" value="F:rRNA binding"/>
    <property type="evidence" value="ECO:0007669"/>
    <property type="project" value="UniProtKB-UniRule"/>
</dbReference>
<dbReference type="GO" id="GO:1902626">
    <property type="term" value="P:assembly of large subunit precursor of preribosome"/>
    <property type="evidence" value="ECO:0007669"/>
    <property type="project" value="UniProtKB-UniRule"/>
</dbReference>
<dbReference type="CDD" id="cd16331">
    <property type="entry name" value="YjgA-like"/>
    <property type="match status" value="1"/>
</dbReference>
<dbReference type="FunFam" id="1.10.60.30:FF:000001">
    <property type="entry name" value="UPF0307 protein YjgA"/>
    <property type="match status" value="1"/>
</dbReference>
<dbReference type="FunFam" id="1.10.60.30:FF:000002">
    <property type="entry name" value="UPF0307 protein YjgA"/>
    <property type="match status" value="1"/>
</dbReference>
<dbReference type="Gene3D" id="1.10.60.30">
    <property type="entry name" value="PSPTO4464-like domains"/>
    <property type="match status" value="2"/>
</dbReference>
<dbReference type="HAMAP" id="MF_00765">
    <property type="entry name" value="DarP"/>
    <property type="match status" value="1"/>
</dbReference>
<dbReference type="InterPro" id="IPR006839">
    <property type="entry name" value="DarP"/>
</dbReference>
<dbReference type="InterPro" id="IPR023153">
    <property type="entry name" value="DarP_sf"/>
</dbReference>
<dbReference type="NCBIfam" id="NF003593">
    <property type="entry name" value="PRK05255.1-1"/>
    <property type="match status" value="1"/>
</dbReference>
<dbReference type="PANTHER" id="PTHR38101">
    <property type="entry name" value="UPF0307 PROTEIN YJGA"/>
    <property type="match status" value="1"/>
</dbReference>
<dbReference type="PANTHER" id="PTHR38101:SF1">
    <property type="entry name" value="UPF0307 PROTEIN YJGA"/>
    <property type="match status" value="1"/>
</dbReference>
<dbReference type="Pfam" id="PF04751">
    <property type="entry name" value="DarP"/>
    <property type="match status" value="1"/>
</dbReference>
<dbReference type="PIRSF" id="PIRSF016183">
    <property type="entry name" value="UCP016183"/>
    <property type="match status" value="1"/>
</dbReference>
<dbReference type="SUPFAM" id="SSF158710">
    <property type="entry name" value="PSPTO4464-like"/>
    <property type="match status" value="1"/>
</dbReference>
<name>DARP_ESCF3</name>
<accession>B7LMQ3</accession>
<evidence type="ECO:0000255" key="1">
    <source>
        <dbReference type="HAMAP-Rule" id="MF_00765"/>
    </source>
</evidence>
<sequence length="183" mass="21359">MTKQPEDWLDDVPGDDIEDEDDEIIWVSKSEIKRDAEELKRLGAEIVDLGKNALDKIPLDADLRAAIELAQRIKMEGRRRQLQLIGKMLRQRDVEPIRQALDKLKNRHNQQVVLFHKLENLRDRLIDQGDDAIAEVLNLWPDADRQQLRTLIRNAKKEKEGNKPPKSARQIFQYLRELAENEG</sequence>
<comment type="function">
    <text evidence="1">Member of a network of 50S ribosomal subunit biogenesis factors which assembles along the 30S-50S interface, preventing incorrect 23S rRNA structures from forming. Promotes peptidyl transferase center (PTC) maturation.</text>
</comment>
<comment type="subcellular location">
    <subcellularLocation>
        <location evidence="1">Cytoplasm</location>
    </subcellularLocation>
    <text evidence="1">Associates with late stage pre-50S ribosomal subunits.</text>
</comment>
<comment type="similarity">
    <text evidence="1">Belongs to the DarP family.</text>
</comment>
<feature type="chain" id="PRO_1000198386" description="Dual-action ribosomal maturation protein DarP">
    <location>
        <begin position="1"/>
        <end position="183"/>
    </location>
</feature>